<proteinExistence type="inferred from homology"/>
<organism>
    <name type="scientific">Salmonella newport (strain SL254)</name>
    <dbReference type="NCBI Taxonomy" id="423368"/>
    <lineage>
        <taxon>Bacteria</taxon>
        <taxon>Pseudomonadati</taxon>
        <taxon>Pseudomonadota</taxon>
        <taxon>Gammaproteobacteria</taxon>
        <taxon>Enterobacterales</taxon>
        <taxon>Enterobacteriaceae</taxon>
        <taxon>Salmonella</taxon>
    </lineage>
</organism>
<gene>
    <name evidence="1" type="primary">rplS</name>
    <name type="ordered locus">SNSL254_A2887</name>
</gene>
<sequence>MSNIIKQLEQEQMKQNVPSFRPGDTVEVKVWVVEGTKKRLQAFEGVVIAIRNRGLHSAFTVRKISNGEGVERVFQTHSPVVDSIAVKRRGAVRKAKLYYLRERTGKAARIKERLN</sequence>
<keyword id="KW-0687">Ribonucleoprotein</keyword>
<keyword id="KW-0689">Ribosomal protein</keyword>
<protein>
    <recommendedName>
        <fullName evidence="1">Large ribosomal subunit protein bL19</fullName>
    </recommendedName>
    <alternativeName>
        <fullName evidence="2">50S ribosomal protein L19</fullName>
    </alternativeName>
</protein>
<dbReference type="EMBL" id="CP001113">
    <property type="protein sequence ID" value="ACF63624.1"/>
    <property type="molecule type" value="Genomic_DNA"/>
</dbReference>
<dbReference type="RefSeq" id="WP_000065257.1">
    <property type="nucleotide sequence ID" value="NZ_CCMR01000001.1"/>
</dbReference>
<dbReference type="SMR" id="B4T2B2"/>
<dbReference type="KEGG" id="see:SNSL254_A2887"/>
<dbReference type="HOGENOM" id="CLU_103507_2_1_6"/>
<dbReference type="Proteomes" id="UP000008824">
    <property type="component" value="Chromosome"/>
</dbReference>
<dbReference type="GO" id="GO:0022625">
    <property type="term" value="C:cytosolic large ribosomal subunit"/>
    <property type="evidence" value="ECO:0007669"/>
    <property type="project" value="TreeGrafter"/>
</dbReference>
<dbReference type="GO" id="GO:0003735">
    <property type="term" value="F:structural constituent of ribosome"/>
    <property type="evidence" value="ECO:0007669"/>
    <property type="project" value="InterPro"/>
</dbReference>
<dbReference type="GO" id="GO:0006412">
    <property type="term" value="P:translation"/>
    <property type="evidence" value="ECO:0007669"/>
    <property type="project" value="UniProtKB-UniRule"/>
</dbReference>
<dbReference type="FunFam" id="2.30.30.790:FF:000001">
    <property type="entry name" value="50S ribosomal protein L19"/>
    <property type="match status" value="1"/>
</dbReference>
<dbReference type="Gene3D" id="2.30.30.790">
    <property type="match status" value="1"/>
</dbReference>
<dbReference type="HAMAP" id="MF_00402">
    <property type="entry name" value="Ribosomal_bL19"/>
    <property type="match status" value="1"/>
</dbReference>
<dbReference type="InterPro" id="IPR001857">
    <property type="entry name" value="Ribosomal_bL19"/>
</dbReference>
<dbReference type="InterPro" id="IPR018257">
    <property type="entry name" value="Ribosomal_bL19_CS"/>
</dbReference>
<dbReference type="InterPro" id="IPR038657">
    <property type="entry name" value="Ribosomal_bL19_sf"/>
</dbReference>
<dbReference type="InterPro" id="IPR008991">
    <property type="entry name" value="Translation_prot_SH3-like_sf"/>
</dbReference>
<dbReference type="NCBIfam" id="TIGR01024">
    <property type="entry name" value="rplS_bact"/>
    <property type="match status" value="1"/>
</dbReference>
<dbReference type="PANTHER" id="PTHR15680:SF9">
    <property type="entry name" value="LARGE RIBOSOMAL SUBUNIT PROTEIN BL19M"/>
    <property type="match status" value="1"/>
</dbReference>
<dbReference type="PANTHER" id="PTHR15680">
    <property type="entry name" value="RIBOSOMAL PROTEIN L19"/>
    <property type="match status" value="1"/>
</dbReference>
<dbReference type="Pfam" id="PF01245">
    <property type="entry name" value="Ribosomal_L19"/>
    <property type="match status" value="1"/>
</dbReference>
<dbReference type="PIRSF" id="PIRSF002191">
    <property type="entry name" value="Ribosomal_L19"/>
    <property type="match status" value="1"/>
</dbReference>
<dbReference type="PRINTS" id="PR00061">
    <property type="entry name" value="RIBOSOMALL19"/>
</dbReference>
<dbReference type="SUPFAM" id="SSF50104">
    <property type="entry name" value="Translation proteins SH3-like domain"/>
    <property type="match status" value="1"/>
</dbReference>
<dbReference type="PROSITE" id="PS01015">
    <property type="entry name" value="RIBOSOMAL_L19"/>
    <property type="match status" value="1"/>
</dbReference>
<feature type="chain" id="PRO_1000193880" description="Large ribosomal subunit protein bL19">
    <location>
        <begin position="1"/>
        <end position="115"/>
    </location>
</feature>
<accession>B4T2B2</accession>
<reference key="1">
    <citation type="journal article" date="2011" name="J. Bacteriol.">
        <title>Comparative genomics of 28 Salmonella enterica isolates: evidence for CRISPR-mediated adaptive sublineage evolution.</title>
        <authorList>
            <person name="Fricke W.F."/>
            <person name="Mammel M.K."/>
            <person name="McDermott P.F."/>
            <person name="Tartera C."/>
            <person name="White D.G."/>
            <person name="Leclerc J.E."/>
            <person name="Ravel J."/>
            <person name="Cebula T.A."/>
        </authorList>
    </citation>
    <scope>NUCLEOTIDE SEQUENCE [LARGE SCALE GENOMIC DNA]</scope>
    <source>
        <strain>SL254</strain>
    </source>
</reference>
<name>RL19_SALNS</name>
<evidence type="ECO:0000255" key="1">
    <source>
        <dbReference type="HAMAP-Rule" id="MF_00402"/>
    </source>
</evidence>
<evidence type="ECO:0000305" key="2"/>
<comment type="function">
    <text evidence="1">This protein is located at the 30S-50S ribosomal subunit interface and may play a role in the structure and function of the aminoacyl-tRNA binding site.</text>
</comment>
<comment type="similarity">
    <text evidence="1">Belongs to the bacterial ribosomal protein bL19 family.</text>
</comment>